<organism>
    <name type="scientific">Acinetobacter baumannii (strain AB0057)</name>
    <dbReference type="NCBI Taxonomy" id="480119"/>
    <lineage>
        <taxon>Bacteria</taxon>
        <taxon>Pseudomonadati</taxon>
        <taxon>Pseudomonadota</taxon>
        <taxon>Gammaproteobacteria</taxon>
        <taxon>Moraxellales</taxon>
        <taxon>Moraxellaceae</taxon>
        <taxon>Acinetobacter</taxon>
        <taxon>Acinetobacter calcoaceticus/baumannii complex</taxon>
    </lineage>
</organism>
<name>PROB_ACIB5</name>
<sequence>MIEVVDGQRKLSECKRIVVKIGSSLLTANGQGLDLDAISHWAKQIADLHNAGHEIILVSSGAVAEGMVRMKLASRPTDLPSLQACAAIGQMGLIHTWSSVLENHSIRTAQVLLTHDDLADRRRYLNSCDALQNLIDWRVIPVINENDTVSTDEIRFGDNDTLAAMVAGQVHADLLIILTDQQGMFDSDPRHNPDAKLLSTVRAMDDVLFEMAGGGGVLGRGGMVTKVRAARLAAKSGCPTLIASGESDNVLSRVMAGEMLGTLFTTDKDRMTAHQQWLAAHLQTAGRLVIDDGAVEAIKLKHRSLLPVGVKTVEGHFDRGDVVECVDKQGKRVAVGRVNFSSRSAEIIKGLSSDKVYQVLGEARSLEMIHRDHMAIY</sequence>
<protein>
    <recommendedName>
        <fullName evidence="1">Glutamate 5-kinase</fullName>
        <ecNumber evidence="1">2.7.2.11</ecNumber>
    </recommendedName>
    <alternativeName>
        <fullName evidence="1">Gamma-glutamyl kinase</fullName>
        <shortName evidence="1">GK</shortName>
    </alternativeName>
</protein>
<evidence type="ECO:0000255" key="1">
    <source>
        <dbReference type="HAMAP-Rule" id="MF_00456"/>
    </source>
</evidence>
<keyword id="KW-0028">Amino-acid biosynthesis</keyword>
<keyword id="KW-0067">ATP-binding</keyword>
<keyword id="KW-0963">Cytoplasm</keyword>
<keyword id="KW-0418">Kinase</keyword>
<keyword id="KW-0547">Nucleotide-binding</keyword>
<keyword id="KW-0641">Proline biosynthesis</keyword>
<keyword id="KW-0808">Transferase</keyword>
<feature type="chain" id="PRO_1000125203" description="Glutamate 5-kinase">
    <location>
        <begin position="1"/>
        <end position="377"/>
    </location>
</feature>
<feature type="domain" description="PUA" evidence="1">
    <location>
        <begin position="285"/>
        <end position="363"/>
    </location>
</feature>
<feature type="binding site" evidence="1">
    <location>
        <position position="20"/>
    </location>
    <ligand>
        <name>ATP</name>
        <dbReference type="ChEBI" id="CHEBI:30616"/>
    </ligand>
</feature>
<feature type="binding site" evidence="1">
    <location>
        <position position="60"/>
    </location>
    <ligand>
        <name>substrate</name>
    </ligand>
</feature>
<feature type="binding site" evidence="1">
    <location>
        <position position="147"/>
    </location>
    <ligand>
        <name>substrate</name>
    </ligand>
</feature>
<feature type="binding site" evidence="1">
    <location>
        <position position="159"/>
    </location>
    <ligand>
        <name>substrate</name>
    </ligand>
</feature>
<feature type="binding site" evidence="1">
    <location>
        <begin position="179"/>
        <end position="180"/>
    </location>
    <ligand>
        <name>ATP</name>
        <dbReference type="ChEBI" id="CHEBI:30616"/>
    </ligand>
</feature>
<proteinExistence type="inferred from homology"/>
<gene>
    <name evidence="1" type="primary">proB</name>
    <name type="ordered locus">AB57_2940</name>
</gene>
<dbReference type="EC" id="2.7.2.11" evidence="1"/>
<dbReference type="EMBL" id="CP001182">
    <property type="protein sequence ID" value="ACJ42283.1"/>
    <property type="molecule type" value="Genomic_DNA"/>
</dbReference>
<dbReference type="RefSeq" id="WP_000573844.1">
    <property type="nucleotide sequence ID" value="NC_011586.2"/>
</dbReference>
<dbReference type="SMR" id="B7I556"/>
<dbReference type="GeneID" id="92894804"/>
<dbReference type="KEGG" id="abn:AB57_2940"/>
<dbReference type="HOGENOM" id="CLU_025400_2_0_6"/>
<dbReference type="UniPathway" id="UPA00098">
    <property type="reaction ID" value="UER00359"/>
</dbReference>
<dbReference type="Proteomes" id="UP000007094">
    <property type="component" value="Chromosome"/>
</dbReference>
<dbReference type="GO" id="GO:0005829">
    <property type="term" value="C:cytosol"/>
    <property type="evidence" value="ECO:0007669"/>
    <property type="project" value="TreeGrafter"/>
</dbReference>
<dbReference type="GO" id="GO:0005524">
    <property type="term" value="F:ATP binding"/>
    <property type="evidence" value="ECO:0007669"/>
    <property type="project" value="UniProtKB-KW"/>
</dbReference>
<dbReference type="GO" id="GO:0004349">
    <property type="term" value="F:glutamate 5-kinase activity"/>
    <property type="evidence" value="ECO:0007669"/>
    <property type="project" value="UniProtKB-UniRule"/>
</dbReference>
<dbReference type="GO" id="GO:0003723">
    <property type="term" value="F:RNA binding"/>
    <property type="evidence" value="ECO:0007669"/>
    <property type="project" value="InterPro"/>
</dbReference>
<dbReference type="GO" id="GO:0055129">
    <property type="term" value="P:L-proline biosynthetic process"/>
    <property type="evidence" value="ECO:0007669"/>
    <property type="project" value="UniProtKB-UniRule"/>
</dbReference>
<dbReference type="CDD" id="cd04242">
    <property type="entry name" value="AAK_G5K_ProB"/>
    <property type="match status" value="1"/>
</dbReference>
<dbReference type="CDD" id="cd21157">
    <property type="entry name" value="PUA_G5K"/>
    <property type="match status" value="1"/>
</dbReference>
<dbReference type="FunFam" id="3.40.1160.10:FF:000018">
    <property type="entry name" value="Glutamate 5-kinase"/>
    <property type="match status" value="1"/>
</dbReference>
<dbReference type="Gene3D" id="3.40.1160.10">
    <property type="entry name" value="Acetylglutamate kinase-like"/>
    <property type="match status" value="2"/>
</dbReference>
<dbReference type="Gene3D" id="2.30.130.10">
    <property type="entry name" value="PUA domain"/>
    <property type="match status" value="1"/>
</dbReference>
<dbReference type="HAMAP" id="MF_00456">
    <property type="entry name" value="ProB"/>
    <property type="match status" value="1"/>
</dbReference>
<dbReference type="InterPro" id="IPR036393">
    <property type="entry name" value="AceGlu_kinase-like_sf"/>
</dbReference>
<dbReference type="InterPro" id="IPR001048">
    <property type="entry name" value="Asp/Glu/Uridylate_kinase"/>
</dbReference>
<dbReference type="InterPro" id="IPR041739">
    <property type="entry name" value="G5K_ProB"/>
</dbReference>
<dbReference type="InterPro" id="IPR001057">
    <property type="entry name" value="Glu/AcGlu_kinase"/>
</dbReference>
<dbReference type="InterPro" id="IPR011529">
    <property type="entry name" value="Glu_5kinase"/>
</dbReference>
<dbReference type="InterPro" id="IPR005715">
    <property type="entry name" value="Glu_5kinase/COase_Synthase"/>
</dbReference>
<dbReference type="InterPro" id="IPR019797">
    <property type="entry name" value="Glutamate_5-kinase_CS"/>
</dbReference>
<dbReference type="InterPro" id="IPR002478">
    <property type="entry name" value="PUA"/>
</dbReference>
<dbReference type="InterPro" id="IPR015947">
    <property type="entry name" value="PUA-like_sf"/>
</dbReference>
<dbReference type="InterPro" id="IPR036974">
    <property type="entry name" value="PUA_sf"/>
</dbReference>
<dbReference type="NCBIfam" id="TIGR01027">
    <property type="entry name" value="proB"/>
    <property type="match status" value="1"/>
</dbReference>
<dbReference type="PANTHER" id="PTHR43654">
    <property type="entry name" value="GLUTAMATE 5-KINASE"/>
    <property type="match status" value="1"/>
</dbReference>
<dbReference type="PANTHER" id="PTHR43654:SF1">
    <property type="entry name" value="ISOPENTENYL PHOSPHATE KINASE"/>
    <property type="match status" value="1"/>
</dbReference>
<dbReference type="Pfam" id="PF00696">
    <property type="entry name" value="AA_kinase"/>
    <property type="match status" value="1"/>
</dbReference>
<dbReference type="Pfam" id="PF01472">
    <property type="entry name" value="PUA"/>
    <property type="match status" value="1"/>
</dbReference>
<dbReference type="PIRSF" id="PIRSF000729">
    <property type="entry name" value="GK"/>
    <property type="match status" value="1"/>
</dbReference>
<dbReference type="PRINTS" id="PR00474">
    <property type="entry name" value="GLU5KINASE"/>
</dbReference>
<dbReference type="SMART" id="SM00359">
    <property type="entry name" value="PUA"/>
    <property type="match status" value="1"/>
</dbReference>
<dbReference type="SUPFAM" id="SSF53633">
    <property type="entry name" value="Carbamate kinase-like"/>
    <property type="match status" value="1"/>
</dbReference>
<dbReference type="SUPFAM" id="SSF88697">
    <property type="entry name" value="PUA domain-like"/>
    <property type="match status" value="1"/>
</dbReference>
<dbReference type="PROSITE" id="PS00902">
    <property type="entry name" value="GLUTAMATE_5_KINASE"/>
    <property type="match status" value="1"/>
</dbReference>
<dbReference type="PROSITE" id="PS50890">
    <property type="entry name" value="PUA"/>
    <property type="match status" value="1"/>
</dbReference>
<accession>B7I556</accession>
<comment type="function">
    <text evidence="1">Catalyzes the transfer of a phosphate group to glutamate to form L-glutamate 5-phosphate.</text>
</comment>
<comment type="catalytic activity">
    <reaction evidence="1">
        <text>L-glutamate + ATP = L-glutamyl 5-phosphate + ADP</text>
        <dbReference type="Rhea" id="RHEA:14877"/>
        <dbReference type="ChEBI" id="CHEBI:29985"/>
        <dbReference type="ChEBI" id="CHEBI:30616"/>
        <dbReference type="ChEBI" id="CHEBI:58274"/>
        <dbReference type="ChEBI" id="CHEBI:456216"/>
        <dbReference type="EC" id="2.7.2.11"/>
    </reaction>
</comment>
<comment type="pathway">
    <text evidence="1">Amino-acid biosynthesis; L-proline biosynthesis; L-glutamate 5-semialdehyde from L-glutamate: step 1/2.</text>
</comment>
<comment type="subcellular location">
    <subcellularLocation>
        <location evidence="1">Cytoplasm</location>
    </subcellularLocation>
</comment>
<comment type="similarity">
    <text evidence="1">Belongs to the glutamate 5-kinase family.</text>
</comment>
<reference key="1">
    <citation type="journal article" date="2008" name="J. Bacteriol.">
        <title>Comparative genome sequence analysis of multidrug-resistant Acinetobacter baumannii.</title>
        <authorList>
            <person name="Adams M.D."/>
            <person name="Goglin K."/>
            <person name="Molyneaux N."/>
            <person name="Hujer K.M."/>
            <person name="Lavender H."/>
            <person name="Jamison J.J."/>
            <person name="MacDonald I.J."/>
            <person name="Martin K.M."/>
            <person name="Russo T."/>
            <person name="Campagnari A.A."/>
            <person name="Hujer A.M."/>
            <person name="Bonomo R.A."/>
            <person name="Gill S.R."/>
        </authorList>
    </citation>
    <scope>NUCLEOTIDE SEQUENCE [LARGE SCALE GENOMIC DNA]</scope>
    <source>
        <strain>AB0057</strain>
    </source>
</reference>